<sequence>MIQQRVIRYIEKEHLFLPDDKLLVALSGGADSVALLRVLHTAGYQCEAAHCNFHLRGEESNRDERFVRQLCQKYGIRLHITDFNTTQYATEKRISIEMAARELRYNWFEKIKEECGAHVIAVAHHQDDSVETMLFNLIRGTGITGLLGIRPRNGAIVRPLLCINREEIIRYLQQIGQDFVTDSTNLEDEYTRNKIRLNLLPLMQEINPSVKNSLIETSNHLNDVATIYNKVIDEAKTRIITPEGIRIDALLDEPAPEAFLFETLHPLGFNSAQIKDIANSLHGQPGKQFVSKEWRVIKDRNLLLLETIRPEDESTLPYQLIKEEREFTPDFRIPREKETACFDADKLNEEIHCRKWQAGDTFIPFGMTGKKKISDYLTDRKFSISQKERQWVLCCGERIAWLIGERTDNRFRIDETTKRVIIYKIV</sequence>
<reference key="1">
    <citation type="journal article" date="2003" name="Science">
        <title>A genomic view of the human-Bacteroides thetaiotaomicron symbiosis.</title>
        <authorList>
            <person name="Xu J."/>
            <person name="Bjursell M.K."/>
            <person name="Himrod J."/>
            <person name="Deng S."/>
            <person name="Carmichael L.K."/>
            <person name="Chiang H.C."/>
            <person name="Hooper L.V."/>
            <person name="Gordon J.I."/>
        </authorList>
    </citation>
    <scope>NUCLEOTIDE SEQUENCE [LARGE SCALE GENOMIC DNA]</scope>
    <source>
        <strain>ATCC 29148 / DSM 2079 / JCM 5827 / CCUG 10774 / NCTC 10582 / VPI-5482 / E50</strain>
    </source>
</reference>
<accession>Q8A7D1</accession>
<comment type="function">
    <text evidence="1">Ligates lysine onto the cytidine present at position 34 of the AUA codon-specific tRNA(Ile) that contains the anticodon CAU, in an ATP-dependent manner. Cytidine is converted to lysidine, thus changing the amino acid specificity of the tRNA from methionine to isoleucine.</text>
</comment>
<comment type="catalytic activity">
    <reaction evidence="1">
        <text>cytidine(34) in tRNA(Ile2) + L-lysine + ATP = lysidine(34) in tRNA(Ile2) + AMP + diphosphate + H(+)</text>
        <dbReference type="Rhea" id="RHEA:43744"/>
        <dbReference type="Rhea" id="RHEA-COMP:10625"/>
        <dbReference type="Rhea" id="RHEA-COMP:10670"/>
        <dbReference type="ChEBI" id="CHEBI:15378"/>
        <dbReference type="ChEBI" id="CHEBI:30616"/>
        <dbReference type="ChEBI" id="CHEBI:32551"/>
        <dbReference type="ChEBI" id="CHEBI:33019"/>
        <dbReference type="ChEBI" id="CHEBI:82748"/>
        <dbReference type="ChEBI" id="CHEBI:83665"/>
        <dbReference type="ChEBI" id="CHEBI:456215"/>
        <dbReference type="EC" id="6.3.4.19"/>
    </reaction>
</comment>
<comment type="subcellular location">
    <subcellularLocation>
        <location evidence="1">Cytoplasm</location>
    </subcellularLocation>
</comment>
<comment type="domain">
    <text>The N-terminal region contains the highly conserved SGGXDS motif, predicted to be a P-loop motif involved in ATP binding.</text>
</comment>
<comment type="similarity">
    <text evidence="1">Belongs to the tRNA(Ile)-lysidine synthase family.</text>
</comment>
<dbReference type="EC" id="6.3.4.19" evidence="1"/>
<dbReference type="EMBL" id="AE015928">
    <property type="protein sequence ID" value="AAO76700.1"/>
    <property type="molecule type" value="Genomic_DNA"/>
</dbReference>
<dbReference type="RefSeq" id="NP_810506.1">
    <property type="nucleotide sequence ID" value="NC_004663.1"/>
</dbReference>
<dbReference type="RefSeq" id="WP_011107882.1">
    <property type="nucleotide sequence ID" value="NC_004663.1"/>
</dbReference>
<dbReference type="SMR" id="Q8A7D1"/>
<dbReference type="FunCoup" id="Q8A7D1">
    <property type="interactions" value="282"/>
</dbReference>
<dbReference type="STRING" id="226186.BT_1593"/>
<dbReference type="PaxDb" id="226186-BT_1593"/>
<dbReference type="EnsemblBacteria" id="AAO76700">
    <property type="protein sequence ID" value="AAO76700"/>
    <property type="gene ID" value="BT_1593"/>
</dbReference>
<dbReference type="GeneID" id="60927578"/>
<dbReference type="KEGG" id="bth:BT_1593"/>
<dbReference type="PATRIC" id="fig|226186.12.peg.1630"/>
<dbReference type="eggNOG" id="COG0037">
    <property type="taxonomic scope" value="Bacteria"/>
</dbReference>
<dbReference type="HOGENOM" id="CLU_018869_0_1_10"/>
<dbReference type="InParanoid" id="Q8A7D1"/>
<dbReference type="OrthoDB" id="9807403at2"/>
<dbReference type="Proteomes" id="UP000001414">
    <property type="component" value="Chromosome"/>
</dbReference>
<dbReference type="GO" id="GO:0005737">
    <property type="term" value="C:cytoplasm"/>
    <property type="evidence" value="ECO:0007669"/>
    <property type="project" value="UniProtKB-SubCell"/>
</dbReference>
<dbReference type="GO" id="GO:0005524">
    <property type="term" value="F:ATP binding"/>
    <property type="evidence" value="ECO:0007669"/>
    <property type="project" value="UniProtKB-UniRule"/>
</dbReference>
<dbReference type="GO" id="GO:0032267">
    <property type="term" value="F:tRNA(Ile)-lysidine synthase activity"/>
    <property type="evidence" value="ECO:0007669"/>
    <property type="project" value="UniProtKB-EC"/>
</dbReference>
<dbReference type="GO" id="GO:0006400">
    <property type="term" value="P:tRNA modification"/>
    <property type="evidence" value="ECO:0007669"/>
    <property type="project" value="UniProtKB-UniRule"/>
</dbReference>
<dbReference type="CDD" id="cd01992">
    <property type="entry name" value="TilS_N"/>
    <property type="match status" value="1"/>
</dbReference>
<dbReference type="Gene3D" id="3.40.50.620">
    <property type="entry name" value="HUPs"/>
    <property type="match status" value="1"/>
</dbReference>
<dbReference type="HAMAP" id="MF_01161">
    <property type="entry name" value="tRNA_Ile_lys_synt"/>
    <property type="match status" value="1"/>
</dbReference>
<dbReference type="InterPro" id="IPR012796">
    <property type="entry name" value="Lysidine-tRNA-synth_C"/>
</dbReference>
<dbReference type="InterPro" id="IPR014729">
    <property type="entry name" value="Rossmann-like_a/b/a_fold"/>
</dbReference>
<dbReference type="InterPro" id="IPR011063">
    <property type="entry name" value="TilS/TtcA_N"/>
</dbReference>
<dbReference type="InterPro" id="IPR012094">
    <property type="entry name" value="tRNA_Ile_lys_synt"/>
</dbReference>
<dbReference type="InterPro" id="IPR012795">
    <property type="entry name" value="tRNA_Ile_lys_synt_N"/>
</dbReference>
<dbReference type="NCBIfam" id="TIGR02433">
    <property type="entry name" value="lysidine_TilS_C"/>
    <property type="match status" value="1"/>
</dbReference>
<dbReference type="NCBIfam" id="TIGR02432">
    <property type="entry name" value="lysidine_TilS_N"/>
    <property type="match status" value="1"/>
</dbReference>
<dbReference type="PANTHER" id="PTHR43033">
    <property type="entry name" value="TRNA(ILE)-LYSIDINE SYNTHASE-RELATED"/>
    <property type="match status" value="1"/>
</dbReference>
<dbReference type="PANTHER" id="PTHR43033:SF1">
    <property type="entry name" value="TRNA(ILE)-LYSIDINE SYNTHASE-RELATED"/>
    <property type="match status" value="1"/>
</dbReference>
<dbReference type="Pfam" id="PF01171">
    <property type="entry name" value="ATP_bind_3"/>
    <property type="match status" value="1"/>
</dbReference>
<dbReference type="SMART" id="SM00977">
    <property type="entry name" value="TilS_C"/>
    <property type="match status" value="1"/>
</dbReference>
<dbReference type="SUPFAM" id="SSF52402">
    <property type="entry name" value="Adenine nucleotide alpha hydrolases-like"/>
    <property type="match status" value="1"/>
</dbReference>
<dbReference type="SUPFAM" id="SSF56037">
    <property type="entry name" value="PheT/TilS domain"/>
    <property type="match status" value="1"/>
</dbReference>
<keyword id="KW-0067">ATP-binding</keyword>
<keyword id="KW-0963">Cytoplasm</keyword>
<keyword id="KW-0436">Ligase</keyword>
<keyword id="KW-0547">Nucleotide-binding</keyword>
<keyword id="KW-1185">Reference proteome</keyword>
<keyword id="KW-0819">tRNA processing</keyword>
<proteinExistence type="inferred from homology"/>
<name>TILS_BACTN</name>
<gene>
    <name evidence="1" type="primary">tilS</name>
    <name type="ordered locus">BT_1593</name>
</gene>
<feature type="chain" id="PRO_0000181651" description="tRNA(Ile)-lysidine synthase">
    <location>
        <begin position="1"/>
        <end position="426"/>
    </location>
</feature>
<feature type="binding site" evidence="1">
    <location>
        <begin position="27"/>
        <end position="32"/>
    </location>
    <ligand>
        <name>ATP</name>
        <dbReference type="ChEBI" id="CHEBI:30616"/>
    </ligand>
</feature>
<organism>
    <name type="scientific">Bacteroides thetaiotaomicron (strain ATCC 29148 / DSM 2079 / JCM 5827 / CCUG 10774 / NCTC 10582 / VPI-5482 / E50)</name>
    <dbReference type="NCBI Taxonomy" id="226186"/>
    <lineage>
        <taxon>Bacteria</taxon>
        <taxon>Pseudomonadati</taxon>
        <taxon>Bacteroidota</taxon>
        <taxon>Bacteroidia</taxon>
        <taxon>Bacteroidales</taxon>
        <taxon>Bacteroidaceae</taxon>
        <taxon>Bacteroides</taxon>
    </lineage>
</organism>
<evidence type="ECO:0000255" key="1">
    <source>
        <dbReference type="HAMAP-Rule" id="MF_01161"/>
    </source>
</evidence>
<protein>
    <recommendedName>
        <fullName evidence="1">tRNA(Ile)-lysidine synthase</fullName>
        <ecNumber evidence="1">6.3.4.19</ecNumber>
    </recommendedName>
    <alternativeName>
        <fullName evidence="1">tRNA(Ile)-2-lysyl-cytidine synthase</fullName>
    </alternativeName>
    <alternativeName>
        <fullName evidence="1">tRNA(Ile)-lysidine synthetase</fullName>
    </alternativeName>
</protein>